<name>CORZ_BOMMO</name>
<feature type="signal peptide" evidence="3">
    <location>
        <begin position="1"/>
        <end position="19"/>
    </location>
</feature>
<feature type="chain" id="PRO_0000341608" description="Pro-corazonin" evidence="3">
    <location>
        <begin position="20"/>
        <end position="101"/>
    </location>
</feature>
<feature type="peptide" id="PRO_0000000946" description="Corazonin">
    <location>
        <begin position="20"/>
        <end position="30"/>
    </location>
</feature>
<feature type="peptide" id="PRO_0000000947" description="Corazonin precursor-related peptide">
    <location>
        <begin position="34"/>
        <end position="101"/>
    </location>
</feature>
<feature type="modified residue" description="Pyrrolidone carboxylic acid" evidence="2">
    <location>
        <position position="20"/>
    </location>
</feature>
<feature type="modified residue" description="Asparagine amide" evidence="1">
    <location>
        <position position="30"/>
    </location>
</feature>
<comment type="function">
    <text evidence="2">Cardioactive peptide. Corazonin is probably involved in the physiological regulation of the heart beat (By similarity).</text>
</comment>
<comment type="subcellular location">
    <molecule>Corazonin</molecule>
    <subcellularLocation>
        <location evidence="2">Secreted</location>
    </subcellularLocation>
</comment>
<comment type="subcellular location">
    <molecule>Corazonin precursor-related peptide</molecule>
    <subcellularLocation>
        <location evidence="2">Secreted</location>
    </subcellularLocation>
</comment>
<comment type="similarity">
    <text evidence="4">Belongs to the corazonin family.</text>
</comment>
<proteinExistence type="inferred from homology"/>
<sequence>MVTNITLILTLMTLASVTAQTFQYSRGWTNGKRDGHKRDELRDEVLERILTPCQLDKLKYVLEGKPLNDRLFVPCDYIEEEVNQPKRYKGERNHELFDVFQ</sequence>
<gene>
    <name type="primary">crz</name>
</gene>
<dbReference type="EMBL" id="AB106876">
    <property type="protein sequence ID" value="BAC66443.1"/>
    <property type="molecule type" value="mRNA"/>
</dbReference>
<dbReference type="RefSeq" id="NP_001036899.1">
    <property type="nucleotide sequence ID" value="NM_001043434.1"/>
</dbReference>
<dbReference type="RefSeq" id="XP_012546619.1">
    <property type="nucleotide sequence ID" value="XM_012691165.1"/>
</dbReference>
<dbReference type="RefSeq" id="XP_012546625.1">
    <property type="nucleotide sequence ID" value="XM_012691171.1"/>
</dbReference>
<dbReference type="STRING" id="7091.Q86N75"/>
<dbReference type="PaxDb" id="7091-BGIBMGA002280-TA"/>
<dbReference type="EnsemblMetazoa" id="NM_001043434.1">
    <property type="protein sequence ID" value="NP_001036899.1"/>
    <property type="gene ID" value="GeneID_692443"/>
</dbReference>
<dbReference type="GeneID" id="692443"/>
<dbReference type="KEGG" id="bmor:692443"/>
<dbReference type="CTD" id="12973"/>
<dbReference type="eggNOG" id="ENOG502TC0X">
    <property type="taxonomic scope" value="Eukaryota"/>
</dbReference>
<dbReference type="HOGENOM" id="CLU_2266589_0_0_1"/>
<dbReference type="InParanoid" id="Q86N75"/>
<dbReference type="OMA" id="EKILTPC"/>
<dbReference type="Proteomes" id="UP000005204">
    <property type="component" value="Unassembled WGS sequence"/>
</dbReference>
<dbReference type="GO" id="GO:0005576">
    <property type="term" value="C:extracellular region"/>
    <property type="evidence" value="ECO:0000250"/>
    <property type="project" value="UniProtKB"/>
</dbReference>
<dbReference type="GO" id="GO:0071858">
    <property type="term" value="F:corazonin receptor binding"/>
    <property type="evidence" value="ECO:0007669"/>
    <property type="project" value="InterPro"/>
</dbReference>
<dbReference type="GO" id="GO:0005184">
    <property type="term" value="F:neuropeptide hormone activity"/>
    <property type="evidence" value="ECO:0000250"/>
    <property type="project" value="UniProtKB"/>
</dbReference>
<dbReference type="GO" id="GO:0007218">
    <property type="term" value="P:neuropeptide signaling pathway"/>
    <property type="evidence" value="ECO:0007669"/>
    <property type="project" value="UniProtKB-KW"/>
</dbReference>
<dbReference type="GO" id="GO:0045823">
    <property type="term" value="P:positive regulation of heart contraction"/>
    <property type="evidence" value="ECO:0000250"/>
    <property type="project" value="UniProtKB"/>
</dbReference>
<dbReference type="InterPro" id="IPR020190">
    <property type="entry name" value="Procorazonin"/>
</dbReference>
<dbReference type="Pfam" id="PF17308">
    <property type="entry name" value="Corazonin"/>
    <property type="match status" value="1"/>
</dbReference>
<organism>
    <name type="scientific">Bombyx mori</name>
    <name type="common">Silk moth</name>
    <dbReference type="NCBI Taxonomy" id="7091"/>
    <lineage>
        <taxon>Eukaryota</taxon>
        <taxon>Metazoa</taxon>
        <taxon>Ecdysozoa</taxon>
        <taxon>Arthropoda</taxon>
        <taxon>Hexapoda</taxon>
        <taxon>Insecta</taxon>
        <taxon>Pterygota</taxon>
        <taxon>Neoptera</taxon>
        <taxon>Endopterygota</taxon>
        <taxon>Lepidoptera</taxon>
        <taxon>Glossata</taxon>
        <taxon>Ditrysia</taxon>
        <taxon>Bombycoidea</taxon>
        <taxon>Bombycidae</taxon>
        <taxon>Bombycinae</taxon>
        <taxon>Bombyx</taxon>
    </lineage>
</organism>
<keyword id="KW-0027">Amidation</keyword>
<keyword id="KW-0165">Cleavage on pair of basic residues</keyword>
<keyword id="KW-0527">Neuropeptide</keyword>
<keyword id="KW-0873">Pyrrolidone carboxylic acid</keyword>
<keyword id="KW-1185">Reference proteome</keyword>
<keyword id="KW-0964">Secreted</keyword>
<keyword id="KW-0732">Signal</keyword>
<accession>Q86N75</accession>
<reference evidence="5" key="1">
    <citation type="submission" date="2003-03" db="EMBL/GenBank/DDBJ databases">
        <title>Corazonin gene in the silkworm Bombyx mori.</title>
        <authorList>
            <person name="Roller L."/>
            <person name="Tanaka Y."/>
        </authorList>
    </citation>
    <scope>NUCLEOTIDE SEQUENCE [MRNA]</scope>
    <source>
        <tissue>Brain</tissue>
    </source>
</reference>
<evidence type="ECO:0000250" key="1"/>
<evidence type="ECO:0000250" key="2">
    <source>
        <dbReference type="UniProtKB" id="Q26377"/>
    </source>
</evidence>
<evidence type="ECO:0000255" key="3"/>
<evidence type="ECO:0000305" key="4"/>
<evidence type="ECO:0000312" key="5">
    <source>
        <dbReference type="EMBL" id="BAC66443.1"/>
    </source>
</evidence>
<protein>
    <recommendedName>
        <fullName>Pro-corazonin</fullName>
        <shortName>BmCrz</shortName>
        <shortName>Crz</shortName>
    </recommendedName>
    <component>
        <recommendedName>
            <fullName>Corazonin</fullName>
        </recommendedName>
    </component>
    <component>
        <recommendedName>
            <fullName>Corazonin precursor-related peptide</fullName>
            <shortName>CPRP</shortName>
        </recommendedName>
    </component>
</protein>